<reference key="1">
    <citation type="journal article" date="2002" name="Nucleic Acids Res.">
        <title>Genome sequence of Shigella flexneri 2a: insights into pathogenicity through comparison with genomes of Escherichia coli K12 and O157.</title>
        <authorList>
            <person name="Jin Q."/>
            <person name="Yuan Z."/>
            <person name="Xu J."/>
            <person name="Wang Y."/>
            <person name="Shen Y."/>
            <person name="Lu W."/>
            <person name="Wang J."/>
            <person name="Liu H."/>
            <person name="Yang J."/>
            <person name="Yang F."/>
            <person name="Zhang X."/>
            <person name="Zhang J."/>
            <person name="Yang G."/>
            <person name="Wu H."/>
            <person name="Qu D."/>
            <person name="Dong J."/>
            <person name="Sun L."/>
            <person name="Xue Y."/>
            <person name="Zhao A."/>
            <person name="Gao Y."/>
            <person name="Zhu J."/>
            <person name="Kan B."/>
            <person name="Ding K."/>
            <person name="Chen S."/>
            <person name="Cheng H."/>
            <person name="Yao Z."/>
            <person name="He B."/>
            <person name="Chen R."/>
            <person name="Ma D."/>
            <person name="Qiang B."/>
            <person name="Wen Y."/>
            <person name="Hou Y."/>
            <person name="Yu J."/>
        </authorList>
    </citation>
    <scope>NUCLEOTIDE SEQUENCE [LARGE SCALE GENOMIC DNA]</scope>
    <source>
        <strain>301 / Serotype 2a</strain>
    </source>
</reference>
<reference key="2">
    <citation type="journal article" date="2003" name="Infect. Immun.">
        <title>Complete genome sequence and comparative genomics of Shigella flexneri serotype 2a strain 2457T.</title>
        <authorList>
            <person name="Wei J."/>
            <person name="Goldberg M.B."/>
            <person name="Burland V."/>
            <person name="Venkatesan M.M."/>
            <person name="Deng W."/>
            <person name="Fournier G."/>
            <person name="Mayhew G.F."/>
            <person name="Plunkett G. III"/>
            <person name="Rose D.J."/>
            <person name="Darling A."/>
            <person name="Mau B."/>
            <person name="Perna N.T."/>
            <person name="Payne S.M."/>
            <person name="Runyen-Janecky L.J."/>
            <person name="Zhou S."/>
            <person name="Schwartz D.C."/>
            <person name="Blattner F.R."/>
        </authorList>
    </citation>
    <scope>NUCLEOTIDE SEQUENCE [LARGE SCALE GENOMIC DNA]</scope>
    <source>
        <strain>ATCC 700930 / 2457T / Serotype 2a</strain>
    </source>
</reference>
<feature type="chain" id="PRO_0000070637" description="HTH-type transcriptional regulator RutR">
    <location>
        <begin position="1"/>
        <end position="212"/>
    </location>
</feature>
<feature type="domain" description="HTH tetR-type" evidence="2">
    <location>
        <begin position="17"/>
        <end position="77"/>
    </location>
</feature>
<feature type="DNA-binding region" description="H-T-H motif" evidence="2">
    <location>
        <begin position="39"/>
        <end position="58"/>
    </location>
</feature>
<comment type="function">
    <text evidence="1">Master transcription regulator which represses the degradation of pyrimidines (rutABCDEFG) and purines (gcl operon) for maintenance of metabolic balance between pyrimidines and purines. It also regulates the synthesis of pyrimidine nucleotides and arginine from glutamine (carAB) and the supply of glutamate (gadABWX) (By similarity).</text>
</comment>
<comment type="subunit">
    <text evidence="1">Homodimer.</text>
</comment>
<gene>
    <name type="primary">rutR</name>
    <name type="ordered locus">SF1016</name>
    <name type="ordered locus">S1086</name>
</gene>
<organism>
    <name type="scientific">Shigella flexneri</name>
    <dbReference type="NCBI Taxonomy" id="623"/>
    <lineage>
        <taxon>Bacteria</taxon>
        <taxon>Pseudomonadati</taxon>
        <taxon>Pseudomonadota</taxon>
        <taxon>Gammaproteobacteria</taxon>
        <taxon>Enterobacterales</taxon>
        <taxon>Enterobacteriaceae</taxon>
        <taxon>Shigella</taxon>
    </lineage>
</organism>
<sequence length="212" mass="23688">MTQGAVKTTGKRSRAVSAKKKAILSAALDTFSQFGFHGTRLEQIAELAGVSKTNLLYYFPSKEALYIAVLRQILDIWLAPLKAFREDFAPLAAIKEYIRLKLEVSRDYPQASRLFCMEMLAGAPLLMDELTGDLKALIDEKSALIAGWVKSGKLAPIDPQHLIFMIWASTQHYADFAPQVEAVTGATLRDEVFFNQTVENVQRIIIEGIRPR</sequence>
<evidence type="ECO:0000250" key="1"/>
<evidence type="ECO:0000255" key="2">
    <source>
        <dbReference type="PROSITE-ProRule" id="PRU00335"/>
    </source>
</evidence>
<proteinExistence type="inferred from homology"/>
<dbReference type="EMBL" id="AE005674">
    <property type="protein sequence ID" value="AAN42642.1"/>
    <property type="molecule type" value="Genomic_DNA"/>
</dbReference>
<dbReference type="EMBL" id="AE014073">
    <property type="protein sequence ID" value="AAP16527.1"/>
    <property type="molecule type" value="Genomic_DNA"/>
</dbReference>
<dbReference type="RefSeq" id="WP_000191701.1">
    <property type="nucleotide sequence ID" value="NZ_WPGW01000134.1"/>
</dbReference>
<dbReference type="SMR" id="P0ACU4"/>
<dbReference type="STRING" id="198214.SF1016"/>
<dbReference type="PaxDb" id="198214-SF1016"/>
<dbReference type="GeneID" id="75171089"/>
<dbReference type="KEGG" id="sfl:SF1016"/>
<dbReference type="KEGG" id="sfx:S1086"/>
<dbReference type="PATRIC" id="fig|198214.7.peg.1180"/>
<dbReference type="HOGENOM" id="CLU_069356_1_0_6"/>
<dbReference type="Proteomes" id="UP000001006">
    <property type="component" value="Chromosome"/>
</dbReference>
<dbReference type="Proteomes" id="UP000002673">
    <property type="component" value="Chromosome"/>
</dbReference>
<dbReference type="GO" id="GO:0003700">
    <property type="term" value="F:DNA-binding transcription factor activity"/>
    <property type="evidence" value="ECO:0007669"/>
    <property type="project" value="TreeGrafter"/>
</dbReference>
<dbReference type="GO" id="GO:0000976">
    <property type="term" value="F:transcription cis-regulatory region binding"/>
    <property type="evidence" value="ECO:0007669"/>
    <property type="project" value="TreeGrafter"/>
</dbReference>
<dbReference type="GO" id="GO:0045892">
    <property type="term" value="P:negative regulation of DNA-templated transcription"/>
    <property type="evidence" value="ECO:0000250"/>
    <property type="project" value="UniProtKB"/>
</dbReference>
<dbReference type="GO" id="GO:0045893">
    <property type="term" value="P:positive regulation of DNA-templated transcription"/>
    <property type="evidence" value="ECO:0000250"/>
    <property type="project" value="UniProtKB"/>
</dbReference>
<dbReference type="FunFam" id="1.10.357.10:FF:000010">
    <property type="entry name" value="HTH-type transcriptional regulator RutR"/>
    <property type="match status" value="1"/>
</dbReference>
<dbReference type="Gene3D" id="1.10.10.60">
    <property type="entry name" value="Homeodomain-like"/>
    <property type="match status" value="1"/>
</dbReference>
<dbReference type="Gene3D" id="1.10.357.10">
    <property type="entry name" value="Tetracycline Repressor, domain 2"/>
    <property type="match status" value="1"/>
</dbReference>
<dbReference type="InterPro" id="IPR009057">
    <property type="entry name" value="Homeodomain-like_sf"/>
</dbReference>
<dbReference type="InterPro" id="IPR050109">
    <property type="entry name" value="HTH-type_TetR-like_transc_reg"/>
</dbReference>
<dbReference type="InterPro" id="IPR001647">
    <property type="entry name" value="HTH_TetR"/>
</dbReference>
<dbReference type="InterPro" id="IPR036271">
    <property type="entry name" value="Tet_transcr_reg_TetR-rel_C_sf"/>
</dbReference>
<dbReference type="InterPro" id="IPR019915">
    <property type="entry name" value="Tscrpt_reg_pyr_util_RutR"/>
</dbReference>
<dbReference type="InterPro" id="IPR013573">
    <property type="entry name" value="Tscrpt_reg_YcdC_C"/>
</dbReference>
<dbReference type="NCBIfam" id="NF011584">
    <property type="entry name" value="PRK15008.1"/>
    <property type="match status" value="1"/>
</dbReference>
<dbReference type="NCBIfam" id="TIGR03613">
    <property type="entry name" value="RutR"/>
    <property type="match status" value="1"/>
</dbReference>
<dbReference type="PANTHER" id="PTHR30055">
    <property type="entry name" value="HTH-TYPE TRANSCRIPTIONAL REGULATOR RUTR"/>
    <property type="match status" value="1"/>
</dbReference>
<dbReference type="PANTHER" id="PTHR30055:SF196">
    <property type="entry name" value="HTH-TYPE TRANSCRIPTIONAL REGULATOR RUTR"/>
    <property type="match status" value="1"/>
</dbReference>
<dbReference type="Pfam" id="PF08362">
    <property type="entry name" value="TetR_C_3"/>
    <property type="match status" value="1"/>
</dbReference>
<dbReference type="Pfam" id="PF00440">
    <property type="entry name" value="TetR_N"/>
    <property type="match status" value="1"/>
</dbReference>
<dbReference type="PRINTS" id="PR00455">
    <property type="entry name" value="HTHTETR"/>
</dbReference>
<dbReference type="SUPFAM" id="SSF46689">
    <property type="entry name" value="Homeodomain-like"/>
    <property type="match status" value="1"/>
</dbReference>
<dbReference type="SUPFAM" id="SSF48498">
    <property type="entry name" value="Tetracyclin repressor-like, C-terminal domain"/>
    <property type="match status" value="1"/>
</dbReference>
<dbReference type="PROSITE" id="PS50977">
    <property type="entry name" value="HTH_TETR_2"/>
    <property type="match status" value="1"/>
</dbReference>
<protein>
    <recommendedName>
        <fullName>HTH-type transcriptional regulator RutR</fullName>
    </recommendedName>
    <alternativeName>
        <fullName>Rut operon repressor</fullName>
    </alternativeName>
</protein>
<name>RUTR_SHIFL</name>
<accession>P0ACU4</accession>
<accession>P75899</accession>
<keyword id="KW-0238">DNA-binding</keyword>
<keyword id="KW-1185">Reference proteome</keyword>
<keyword id="KW-0678">Repressor</keyword>
<keyword id="KW-0804">Transcription</keyword>
<keyword id="KW-0805">Transcription regulation</keyword>